<accession>Q0I2G1</accession>
<sequence>MQNNIIIFDTTLRDGEQALKASLTVKEKLQIALALERLGVDVMEVGFPVSSAGDFESVQTIARHIKNSRVCALSRAMDKDIDIAADALKVAEAFRIHTFIATSALHVEAKLRRTFDDVVEMAIQAVKRARRYTDDVEFSCEDAGRTGVDNICRIVEAAIKAGATTVNIPDTVGFCLPTEYGNIINQVMNRVPNIDKAVISVHCHNDLGMATANSLTAVQNGARQIECTINGIGERAGNTALEEVVMAIKTRQDIFKGLDTRINTQEIHRVSQMVSQLCNMPIQPNKAIVGSNAFAHSSGIHQDGMVKNKNTYEIMSPETIGLKKEKLNLTARSGRAAVKSHMDAMGYQQNDYDLDKLYAAFLKLADKKGQVFDYDLEALAFIDMQQGDEDRLSLDVITSQTISNLPASAFVQVELDGKKISQVSNGGNGPVDAVYNAILAITDMDITMLHYNLTAKGEGAEALGQVDIVVEHKGRRFHGVGLATDIVESSARALIHAINAIYRANKVADLKSHKISQ</sequence>
<keyword id="KW-0028">Amino-acid biosynthesis</keyword>
<keyword id="KW-0100">Branched-chain amino acid biosynthesis</keyword>
<keyword id="KW-0963">Cytoplasm</keyword>
<keyword id="KW-0432">Leucine biosynthesis</keyword>
<keyword id="KW-0464">Manganese</keyword>
<keyword id="KW-0479">Metal-binding</keyword>
<keyword id="KW-0808">Transferase</keyword>
<comment type="function">
    <text evidence="1">Catalyzes the condensation of the acetyl group of acetyl-CoA with 3-methyl-2-oxobutanoate (2-ketoisovalerate) to form 3-carboxy-3-hydroxy-4-methylpentanoate (2-isopropylmalate).</text>
</comment>
<comment type="catalytic activity">
    <reaction evidence="1">
        <text>3-methyl-2-oxobutanoate + acetyl-CoA + H2O = (2S)-2-isopropylmalate + CoA + H(+)</text>
        <dbReference type="Rhea" id="RHEA:21524"/>
        <dbReference type="ChEBI" id="CHEBI:1178"/>
        <dbReference type="ChEBI" id="CHEBI:11851"/>
        <dbReference type="ChEBI" id="CHEBI:15377"/>
        <dbReference type="ChEBI" id="CHEBI:15378"/>
        <dbReference type="ChEBI" id="CHEBI:57287"/>
        <dbReference type="ChEBI" id="CHEBI:57288"/>
        <dbReference type="EC" id="2.3.3.13"/>
    </reaction>
</comment>
<comment type="cofactor">
    <cofactor evidence="1">
        <name>Mn(2+)</name>
        <dbReference type="ChEBI" id="CHEBI:29035"/>
    </cofactor>
</comment>
<comment type="pathway">
    <text evidence="1">Amino-acid biosynthesis; L-leucine biosynthesis; L-leucine from 3-methyl-2-oxobutanoate: step 1/4.</text>
</comment>
<comment type="subunit">
    <text evidence="1">Homodimer.</text>
</comment>
<comment type="subcellular location">
    <subcellularLocation>
        <location evidence="1">Cytoplasm</location>
    </subcellularLocation>
</comment>
<comment type="similarity">
    <text evidence="1">Belongs to the alpha-IPM synthase/homocitrate synthase family. LeuA type 1 subfamily.</text>
</comment>
<protein>
    <recommendedName>
        <fullName evidence="1">2-isopropylmalate synthase</fullName>
        <ecNumber evidence="1">2.3.3.13</ecNumber>
    </recommendedName>
    <alternativeName>
        <fullName evidence="1">Alpha-IPM synthase</fullName>
    </alternativeName>
    <alternativeName>
        <fullName evidence="1">Alpha-isopropylmalate synthase</fullName>
    </alternativeName>
</protein>
<organism>
    <name type="scientific">Histophilus somni (strain 129Pt)</name>
    <name type="common">Haemophilus somnus</name>
    <dbReference type="NCBI Taxonomy" id="205914"/>
    <lineage>
        <taxon>Bacteria</taxon>
        <taxon>Pseudomonadati</taxon>
        <taxon>Pseudomonadota</taxon>
        <taxon>Gammaproteobacteria</taxon>
        <taxon>Pasteurellales</taxon>
        <taxon>Pasteurellaceae</taxon>
        <taxon>Histophilus</taxon>
    </lineage>
</organism>
<gene>
    <name evidence="1" type="primary">leuA</name>
    <name type="ordered locus">HS_0392</name>
</gene>
<feature type="chain" id="PRO_1000149207" description="2-isopropylmalate synthase">
    <location>
        <begin position="1"/>
        <end position="517"/>
    </location>
</feature>
<feature type="domain" description="Pyruvate carboxyltransferase" evidence="1">
    <location>
        <begin position="5"/>
        <end position="268"/>
    </location>
</feature>
<feature type="region of interest" description="Regulatory domain" evidence="1">
    <location>
        <begin position="393"/>
        <end position="517"/>
    </location>
</feature>
<feature type="binding site" evidence="1">
    <location>
        <position position="14"/>
    </location>
    <ligand>
        <name>Mn(2+)</name>
        <dbReference type="ChEBI" id="CHEBI:29035"/>
    </ligand>
</feature>
<feature type="binding site" evidence="1">
    <location>
        <position position="202"/>
    </location>
    <ligand>
        <name>Mn(2+)</name>
        <dbReference type="ChEBI" id="CHEBI:29035"/>
    </ligand>
</feature>
<feature type="binding site" evidence="1">
    <location>
        <position position="204"/>
    </location>
    <ligand>
        <name>Mn(2+)</name>
        <dbReference type="ChEBI" id="CHEBI:29035"/>
    </ligand>
</feature>
<feature type="binding site" evidence="1">
    <location>
        <position position="238"/>
    </location>
    <ligand>
        <name>Mn(2+)</name>
        <dbReference type="ChEBI" id="CHEBI:29035"/>
    </ligand>
</feature>
<name>LEU1_HISS1</name>
<reference key="1">
    <citation type="journal article" date="2007" name="J. Bacteriol.">
        <title>Complete genome sequence of Haemophilus somnus (Histophilus somni) strain 129Pt and comparison to Haemophilus ducreyi 35000HP and Haemophilus influenzae Rd.</title>
        <authorList>
            <person name="Challacombe J.F."/>
            <person name="Duncan A.J."/>
            <person name="Brettin T.S."/>
            <person name="Bruce D."/>
            <person name="Chertkov O."/>
            <person name="Detter J.C."/>
            <person name="Han C.S."/>
            <person name="Misra M."/>
            <person name="Richardson P."/>
            <person name="Tapia R."/>
            <person name="Thayer N."/>
            <person name="Xie G."/>
            <person name="Inzana T.J."/>
        </authorList>
    </citation>
    <scope>NUCLEOTIDE SEQUENCE [LARGE SCALE GENOMIC DNA]</scope>
    <source>
        <strain>129Pt</strain>
    </source>
</reference>
<evidence type="ECO:0000255" key="1">
    <source>
        <dbReference type="HAMAP-Rule" id="MF_01025"/>
    </source>
</evidence>
<dbReference type="EC" id="2.3.3.13" evidence="1"/>
<dbReference type="EMBL" id="CP000436">
    <property type="protein sequence ID" value="ABI24670.1"/>
    <property type="molecule type" value="Genomic_DNA"/>
</dbReference>
<dbReference type="SMR" id="Q0I2G1"/>
<dbReference type="KEGG" id="hso:HS_0392"/>
<dbReference type="eggNOG" id="COG0119">
    <property type="taxonomic scope" value="Bacteria"/>
</dbReference>
<dbReference type="HOGENOM" id="CLU_022158_0_1_6"/>
<dbReference type="UniPathway" id="UPA00048">
    <property type="reaction ID" value="UER00070"/>
</dbReference>
<dbReference type="GO" id="GO:0005829">
    <property type="term" value="C:cytosol"/>
    <property type="evidence" value="ECO:0007669"/>
    <property type="project" value="TreeGrafter"/>
</dbReference>
<dbReference type="GO" id="GO:0003852">
    <property type="term" value="F:2-isopropylmalate synthase activity"/>
    <property type="evidence" value="ECO:0007669"/>
    <property type="project" value="UniProtKB-UniRule"/>
</dbReference>
<dbReference type="GO" id="GO:0003985">
    <property type="term" value="F:acetyl-CoA C-acetyltransferase activity"/>
    <property type="evidence" value="ECO:0007669"/>
    <property type="project" value="UniProtKB-UniRule"/>
</dbReference>
<dbReference type="GO" id="GO:0030145">
    <property type="term" value="F:manganese ion binding"/>
    <property type="evidence" value="ECO:0007669"/>
    <property type="project" value="UniProtKB-UniRule"/>
</dbReference>
<dbReference type="GO" id="GO:0009098">
    <property type="term" value="P:L-leucine biosynthetic process"/>
    <property type="evidence" value="ECO:0007669"/>
    <property type="project" value="UniProtKB-UniRule"/>
</dbReference>
<dbReference type="CDD" id="cd07940">
    <property type="entry name" value="DRE_TIM_IPMS"/>
    <property type="match status" value="1"/>
</dbReference>
<dbReference type="FunFam" id="1.10.238.260:FF:000001">
    <property type="entry name" value="2-isopropylmalate synthase"/>
    <property type="match status" value="1"/>
</dbReference>
<dbReference type="FunFam" id="3.20.20.70:FF:000010">
    <property type="entry name" value="2-isopropylmalate synthase"/>
    <property type="match status" value="1"/>
</dbReference>
<dbReference type="FunFam" id="3.30.160.270:FF:000001">
    <property type="entry name" value="2-isopropylmalate synthase"/>
    <property type="match status" value="1"/>
</dbReference>
<dbReference type="Gene3D" id="1.10.238.260">
    <property type="match status" value="1"/>
</dbReference>
<dbReference type="Gene3D" id="3.30.160.270">
    <property type="match status" value="1"/>
</dbReference>
<dbReference type="Gene3D" id="3.20.20.70">
    <property type="entry name" value="Aldolase class I"/>
    <property type="match status" value="1"/>
</dbReference>
<dbReference type="HAMAP" id="MF_01025">
    <property type="entry name" value="LeuA_type1"/>
    <property type="match status" value="1"/>
</dbReference>
<dbReference type="InterPro" id="IPR050073">
    <property type="entry name" value="2-IPM_HCS-like"/>
</dbReference>
<dbReference type="InterPro" id="IPR013709">
    <property type="entry name" value="2-isopropylmalate_synth_dimer"/>
</dbReference>
<dbReference type="InterPro" id="IPR002034">
    <property type="entry name" value="AIPM/Hcit_synth_CS"/>
</dbReference>
<dbReference type="InterPro" id="IPR013785">
    <property type="entry name" value="Aldolase_TIM"/>
</dbReference>
<dbReference type="InterPro" id="IPR054691">
    <property type="entry name" value="LeuA/HCS_post-cat"/>
</dbReference>
<dbReference type="InterPro" id="IPR036230">
    <property type="entry name" value="LeuA_allosteric_dom_sf"/>
</dbReference>
<dbReference type="InterPro" id="IPR005671">
    <property type="entry name" value="LeuA_bact_synth"/>
</dbReference>
<dbReference type="InterPro" id="IPR000891">
    <property type="entry name" value="PYR_CT"/>
</dbReference>
<dbReference type="NCBIfam" id="TIGR00973">
    <property type="entry name" value="leuA_bact"/>
    <property type="match status" value="1"/>
</dbReference>
<dbReference type="NCBIfam" id="NF002084">
    <property type="entry name" value="PRK00915.1-1"/>
    <property type="match status" value="1"/>
</dbReference>
<dbReference type="NCBIfam" id="NF002086">
    <property type="entry name" value="PRK00915.1-3"/>
    <property type="match status" value="1"/>
</dbReference>
<dbReference type="PANTHER" id="PTHR10277:SF9">
    <property type="entry name" value="2-ISOPROPYLMALATE SYNTHASE 1, CHLOROPLASTIC-RELATED"/>
    <property type="match status" value="1"/>
</dbReference>
<dbReference type="PANTHER" id="PTHR10277">
    <property type="entry name" value="HOMOCITRATE SYNTHASE-RELATED"/>
    <property type="match status" value="1"/>
</dbReference>
<dbReference type="Pfam" id="PF22617">
    <property type="entry name" value="HCS_D2"/>
    <property type="match status" value="1"/>
</dbReference>
<dbReference type="Pfam" id="PF00682">
    <property type="entry name" value="HMGL-like"/>
    <property type="match status" value="1"/>
</dbReference>
<dbReference type="Pfam" id="PF08502">
    <property type="entry name" value="LeuA_dimer"/>
    <property type="match status" value="1"/>
</dbReference>
<dbReference type="SMART" id="SM00917">
    <property type="entry name" value="LeuA_dimer"/>
    <property type="match status" value="1"/>
</dbReference>
<dbReference type="SUPFAM" id="SSF110921">
    <property type="entry name" value="2-isopropylmalate synthase LeuA, allosteric (dimerisation) domain"/>
    <property type="match status" value="1"/>
</dbReference>
<dbReference type="SUPFAM" id="SSF51569">
    <property type="entry name" value="Aldolase"/>
    <property type="match status" value="1"/>
</dbReference>
<dbReference type="PROSITE" id="PS00815">
    <property type="entry name" value="AIPM_HOMOCIT_SYNTH_1"/>
    <property type="match status" value="1"/>
</dbReference>
<dbReference type="PROSITE" id="PS00816">
    <property type="entry name" value="AIPM_HOMOCIT_SYNTH_2"/>
    <property type="match status" value="1"/>
</dbReference>
<dbReference type="PROSITE" id="PS50991">
    <property type="entry name" value="PYR_CT"/>
    <property type="match status" value="1"/>
</dbReference>
<proteinExistence type="inferred from homology"/>